<name>Y1856_VIBVU</name>
<gene>
    <name type="ordered locus">VV1_1856</name>
</gene>
<sequence length="127" mass="14822">MYPHLTGLGIHDPSQIERYSLRQEAHKDVLKIYFHKQKGEFFAKSVKFKYPRQVKNVLVDSGSHQYKEVTEINRNLTLVIDELNKITKPPKQEDVDIKQKILTDLKHLEKVVASKIAEIEADLEKLK</sequence>
<organism>
    <name type="scientific">Vibrio vulnificus (strain CMCP6)</name>
    <dbReference type="NCBI Taxonomy" id="216895"/>
    <lineage>
        <taxon>Bacteria</taxon>
        <taxon>Pseudomonadati</taxon>
        <taxon>Pseudomonadota</taxon>
        <taxon>Gammaproteobacteria</taxon>
        <taxon>Vibrionales</taxon>
        <taxon>Vibrionaceae</taxon>
        <taxon>Vibrio</taxon>
    </lineage>
</organism>
<feature type="chain" id="PRO_0000211849" description="UPF0325 protein VV1_1856">
    <location>
        <begin position="1"/>
        <end position="127"/>
    </location>
</feature>
<evidence type="ECO:0000255" key="1">
    <source>
        <dbReference type="HAMAP-Rule" id="MF_01519"/>
    </source>
</evidence>
<reference key="1">
    <citation type="submission" date="2002-12" db="EMBL/GenBank/DDBJ databases">
        <title>Complete genome sequence of Vibrio vulnificus CMCP6.</title>
        <authorList>
            <person name="Rhee J.H."/>
            <person name="Kim S.Y."/>
            <person name="Chung S.S."/>
            <person name="Kim J.J."/>
            <person name="Moon Y.H."/>
            <person name="Jeong H."/>
            <person name="Choy H.E."/>
        </authorList>
    </citation>
    <scope>NUCLEOTIDE SEQUENCE [LARGE SCALE GENOMIC DNA]</scope>
    <source>
        <strain>CMCP6</strain>
    </source>
</reference>
<protein>
    <recommendedName>
        <fullName evidence="1">UPF0325 protein VV1_1856</fullName>
    </recommendedName>
</protein>
<proteinExistence type="inferred from homology"/>
<comment type="similarity">
    <text evidence="1">Belongs to the UPF0325 family.</text>
</comment>
<accession>Q8DBG4</accession>
<dbReference type="EMBL" id="AE016795">
    <property type="protein sequence ID" value="AAO10259.1"/>
    <property type="molecule type" value="Genomic_DNA"/>
</dbReference>
<dbReference type="RefSeq" id="WP_011079759.1">
    <property type="nucleotide sequence ID" value="NC_004459.3"/>
</dbReference>
<dbReference type="SMR" id="Q8DBG4"/>
<dbReference type="KEGG" id="vvu:VV1_1856"/>
<dbReference type="HOGENOM" id="CLU_136774_0_0_6"/>
<dbReference type="Proteomes" id="UP000002275">
    <property type="component" value="Chromosome 1"/>
</dbReference>
<dbReference type="HAMAP" id="MF_01519">
    <property type="entry name" value="UPF0325"/>
    <property type="match status" value="1"/>
</dbReference>
<dbReference type="InterPro" id="IPR020911">
    <property type="entry name" value="UPF0325"/>
</dbReference>
<dbReference type="NCBIfam" id="NF010213">
    <property type="entry name" value="PRK13677.1"/>
    <property type="match status" value="1"/>
</dbReference>
<dbReference type="Pfam" id="PF11944">
    <property type="entry name" value="DUF3461"/>
    <property type="match status" value="1"/>
</dbReference>